<proteinExistence type="inferred from homology"/>
<protein>
    <recommendedName>
        <fullName evidence="1">DNA ligase</fullName>
        <ecNumber evidence="1">6.5.1.2</ecNumber>
    </recommendedName>
    <alternativeName>
        <fullName evidence="1">Polydeoxyribonucleotide synthase [NAD(+)]</fullName>
    </alternativeName>
</protein>
<keyword id="KW-0227">DNA damage</keyword>
<keyword id="KW-0234">DNA repair</keyword>
<keyword id="KW-0235">DNA replication</keyword>
<keyword id="KW-0436">Ligase</keyword>
<keyword id="KW-0460">Magnesium</keyword>
<keyword id="KW-0464">Manganese</keyword>
<keyword id="KW-0479">Metal-binding</keyword>
<keyword id="KW-0520">NAD</keyword>
<keyword id="KW-1185">Reference proteome</keyword>
<keyword id="KW-0862">Zinc</keyword>
<evidence type="ECO:0000255" key="1">
    <source>
        <dbReference type="HAMAP-Rule" id="MF_01588"/>
    </source>
</evidence>
<evidence type="ECO:0000256" key="2">
    <source>
        <dbReference type="SAM" id="MobiDB-lite"/>
    </source>
</evidence>
<reference key="1">
    <citation type="journal article" date="2007" name="Genome Res.">
        <title>Genome characteristics of facultatively symbiotic Frankia sp. strains reflect host range and host plant biogeography.</title>
        <authorList>
            <person name="Normand P."/>
            <person name="Lapierre P."/>
            <person name="Tisa L.S."/>
            <person name="Gogarten J.P."/>
            <person name="Alloisio N."/>
            <person name="Bagnarol E."/>
            <person name="Bassi C.A."/>
            <person name="Berry A.M."/>
            <person name="Bickhart D.M."/>
            <person name="Choisne N."/>
            <person name="Couloux A."/>
            <person name="Cournoyer B."/>
            <person name="Cruveiller S."/>
            <person name="Daubin V."/>
            <person name="Demange N."/>
            <person name="Francino M.P."/>
            <person name="Goltsman E."/>
            <person name="Huang Y."/>
            <person name="Kopp O.R."/>
            <person name="Labarre L."/>
            <person name="Lapidus A."/>
            <person name="Lavire C."/>
            <person name="Marechal J."/>
            <person name="Martinez M."/>
            <person name="Mastronunzio J.E."/>
            <person name="Mullin B.C."/>
            <person name="Niemann J."/>
            <person name="Pujic P."/>
            <person name="Rawnsley T."/>
            <person name="Rouy Z."/>
            <person name="Schenowitz C."/>
            <person name="Sellstedt A."/>
            <person name="Tavares F."/>
            <person name="Tomkins J.P."/>
            <person name="Vallenet D."/>
            <person name="Valverde C."/>
            <person name="Wall L.G."/>
            <person name="Wang Y."/>
            <person name="Medigue C."/>
            <person name="Benson D.R."/>
        </authorList>
    </citation>
    <scope>NUCLEOTIDE SEQUENCE [LARGE SCALE GENOMIC DNA]</scope>
    <source>
        <strain>DSM 45818 / CECT 9043 / HFP020203 / CcI3</strain>
    </source>
</reference>
<organism>
    <name type="scientific">Frankia casuarinae (strain DSM 45818 / CECT 9043 / HFP020203 / CcI3)</name>
    <dbReference type="NCBI Taxonomy" id="106370"/>
    <lineage>
        <taxon>Bacteria</taxon>
        <taxon>Bacillati</taxon>
        <taxon>Actinomycetota</taxon>
        <taxon>Actinomycetes</taxon>
        <taxon>Frankiales</taxon>
        <taxon>Frankiaceae</taxon>
        <taxon>Frankia</taxon>
    </lineage>
</organism>
<dbReference type="EC" id="6.5.1.2" evidence="1"/>
<dbReference type="EMBL" id="CP000249">
    <property type="protein sequence ID" value="ABD12999.1"/>
    <property type="molecule type" value="Genomic_DNA"/>
</dbReference>
<dbReference type="RefSeq" id="WP_011438023.1">
    <property type="nucleotide sequence ID" value="NZ_JENI01000005.1"/>
</dbReference>
<dbReference type="SMR" id="Q2J6U3"/>
<dbReference type="STRING" id="106370.Francci3_3647"/>
<dbReference type="KEGG" id="fra:Francci3_3647"/>
<dbReference type="eggNOG" id="COG0272">
    <property type="taxonomic scope" value="Bacteria"/>
</dbReference>
<dbReference type="HOGENOM" id="CLU_007764_2_0_11"/>
<dbReference type="OrthoDB" id="9759736at2"/>
<dbReference type="PhylomeDB" id="Q2J6U3"/>
<dbReference type="Proteomes" id="UP000001937">
    <property type="component" value="Chromosome"/>
</dbReference>
<dbReference type="GO" id="GO:0005829">
    <property type="term" value="C:cytosol"/>
    <property type="evidence" value="ECO:0007669"/>
    <property type="project" value="TreeGrafter"/>
</dbReference>
<dbReference type="GO" id="GO:0003677">
    <property type="term" value="F:DNA binding"/>
    <property type="evidence" value="ECO:0007669"/>
    <property type="project" value="InterPro"/>
</dbReference>
<dbReference type="GO" id="GO:0003911">
    <property type="term" value="F:DNA ligase (NAD+) activity"/>
    <property type="evidence" value="ECO:0007669"/>
    <property type="project" value="UniProtKB-UniRule"/>
</dbReference>
<dbReference type="GO" id="GO:0046872">
    <property type="term" value="F:metal ion binding"/>
    <property type="evidence" value="ECO:0007669"/>
    <property type="project" value="UniProtKB-KW"/>
</dbReference>
<dbReference type="GO" id="GO:0006281">
    <property type="term" value="P:DNA repair"/>
    <property type="evidence" value="ECO:0007669"/>
    <property type="project" value="UniProtKB-KW"/>
</dbReference>
<dbReference type="GO" id="GO:0006260">
    <property type="term" value="P:DNA replication"/>
    <property type="evidence" value="ECO:0007669"/>
    <property type="project" value="UniProtKB-KW"/>
</dbReference>
<dbReference type="CDD" id="cd00114">
    <property type="entry name" value="LIGANc"/>
    <property type="match status" value="1"/>
</dbReference>
<dbReference type="FunFam" id="1.10.150.20:FF:000006">
    <property type="entry name" value="DNA ligase"/>
    <property type="match status" value="1"/>
</dbReference>
<dbReference type="FunFam" id="1.10.287.610:FF:000002">
    <property type="entry name" value="DNA ligase"/>
    <property type="match status" value="1"/>
</dbReference>
<dbReference type="FunFam" id="2.40.50.140:FF:000012">
    <property type="entry name" value="DNA ligase"/>
    <property type="match status" value="1"/>
</dbReference>
<dbReference type="FunFam" id="3.30.470.30:FF:000001">
    <property type="entry name" value="DNA ligase"/>
    <property type="match status" value="1"/>
</dbReference>
<dbReference type="FunFam" id="3.40.50.10190:FF:000054">
    <property type="entry name" value="DNA ligase"/>
    <property type="match status" value="1"/>
</dbReference>
<dbReference type="Gene3D" id="6.20.10.30">
    <property type="match status" value="1"/>
</dbReference>
<dbReference type="Gene3D" id="1.10.150.20">
    <property type="entry name" value="5' to 3' exonuclease, C-terminal subdomain"/>
    <property type="match status" value="2"/>
</dbReference>
<dbReference type="Gene3D" id="3.40.50.10190">
    <property type="entry name" value="BRCT domain"/>
    <property type="match status" value="1"/>
</dbReference>
<dbReference type="Gene3D" id="3.30.470.30">
    <property type="entry name" value="DNA ligase/mRNA capping enzyme"/>
    <property type="match status" value="1"/>
</dbReference>
<dbReference type="Gene3D" id="1.10.287.610">
    <property type="entry name" value="Helix hairpin bin"/>
    <property type="match status" value="1"/>
</dbReference>
<dbReference type="Gene3D" id="2.40.50.140">
    <property type="entry name" value="Nucleic acid-binding proteins"/>
    <property type="match status" value="1"/>
</dbReference>
<dbReference type="HAMAP" id="MF_01588">
    <property type="entry name" value="DNA_ligase_A"/>
    <property type="match status" value="1"/>
</dbReference>
<dbReference type="InterPro" id="IPR001357">
    <property type="entry name" value="BRCT_dom"/>
</dbReference>
<dbReference type="InterPro" id="IPR036420">
    <property type="entry name" value="BRCT_dom_sf"/>
</dbReference>
<dbReference type="InterPro" id="IPR041663">
    <property type="entry name" value="DisA/LigA_HHH"/>
</dbReference>
<dbReference type="InterPro" id="IPR001679">
    <property type="entry name" value="DNA_ligase"/>
</dbReference>
<dbReference type="InterPro" id="IPR018239">
    <property type="entry name" value="DNA_ligase_AS"/>
</dbReference>
<dbReference type="InterPro" id="IPR033136">
    <property type="entry name" value="DNA_ligase_CS"/>
</dbReference>
<dbReference type="InterPro" id="IPR013839">
    <property type="entry name" value="DNAligase_adenylation"/>
</dbReference>
<dbReference type="InterPro" id="IPR013840">
    <property type="entry name" value="DNAligase_N"/>
</dbReference>
<dbReference type="InterPro" id="IPR003583">
    <property type="entry name" value="Hlx-hairpin-Hlx_DNA-bd_motif"/>
</dbReference>
<dbReference type="InterPro" id="IPR012340">
    <property type="entry name" value="NA-bd_OB-fold"/>
</dbReference>
<dbReference type="InterPro" id="IPR004150">
    <property type="entry name" value="NAD_DNA_ligase_OB"/>
</dbReference>
<dbReference type="InterPro" id="IPR010994">
    <property type="entry name" value="RuvA_2-like"/>
</dbReference>
<dbReference type="InterPro" id="IPR004149">
    <property type="entry name" value="Znf_DNAligase_C4"/>
</dbReference>
<dbReference type="NCBIfam" id="TIGR00575">
    <property type="entry name" value="dnlj"/>
    <property type="match status" value="1"/>
</dbReference>
<dbReference type="NCBIfam" id="NF005932">
    <property type="entry name" value="PRK07956.1"/>
    <property type="match status" value="1"/>
</dbReference>
<dbReference type="PANTHER" id="PTHR23389">
    <property type="entry name" value="CHROMOSOME TRANSMISSION FIDELITY FACTOR 18"/>
    <property type="match status" value="1"/>
</dbReference>
<dbReference type="PANTHER" id="PTHR23389:SF9">
    <property type="entry name" value="DNA LIGASE"/>
    <property type="match status" value="1"/>
</dbReference>
<dbReference type="Pfam" id="PF00533">
    <property type="entry name" value="BRCT"/>
    <property type="match status" value="1"/>
</dbReference>
<dbReference type="Pfam" id="PF01653">
    <property type="entry name" value="DNA_ligase_aden"/>
    <property type="match status" value="1"/>
</dbReference>
<dbReference type="Pfam" id="PF03120">
    <property type="entry name" value="DNA_ligase_OB"/>
    <property type="match status" value="1"/>
</dbReference>
<dbReference type="Pfam" id="PF03119">
    <property type="entry name" value="DNA_ligase_ZBD"/>
    <property type="match status" value="1"/>
</dbReference>
<dbReference type="Pfam" id="PF12826">
    <property type="entry name" value="HHH_2"/>
    <property type="match status" value="1"/>
</dbReference>
<dbReference type="Pfam" id="PF14520">
    <property type="entry name" value="HHH_5"/>
    <property type="match status" value="1"/>
</dbReference>
<dbReference type="Pfam" id="PF22745">
    <property type="entry name" value="Nlig-Ia"/>
    <property type="match status" value="1"/>
</dbReference>
<dbReference type="PIRSF" id="PIRSF001604">
    <property type="entry name" value="LigA"/>
    <property type="match status" value="1"/>
</dbReference>
<dbReference type="SMART" id="SM00292">
    <property type="entry name" value="BRCT"/>
    <property type="match status" value="1"/>
</dbReference>
<dbReference type="SMART" id="SM00278">
    <property type="entry name" value="HhH1"/>
    <property type="match status" value="3"/>
</dbReference>
<dbReference type="SMART" id="SM00532">
    <property type="entry name" value="LIGANc"/>
    <property type="match status" value="1"/>
</dbReference>
<dbReference type="SUPFAM" id="SSF52113">
    <property type="entry name" value="BRCT domain"/>
    <property type="match status" value="1"/>
</dbReference>
<dbReference type="SUPFAM" id="SSF56091">
    <property type="entry name" value="DNA ligase/mRNA capping enzyme, catalytic domain"/>
    <property type="match status" value="1"/>
</dbReference>
<dbReference type="SUPFAM" id="SSF50249">
    <property type="entry name" value="Nucleic acid-binding proteins"/>
    <property type="match status" value="1"/>
</dbReference>
<dbReference type="SUPFAM" id="SSF47781">
    <property type="entry name" value="RuvA domain 2-like"/>
    <property type="match status" value="1"/>
</dbReference>
<dbReference type="PROSITE" id="PS50172">
    <property type="entry name" value="BRCT"/>
    <property type="match status" value="1"/>
</dbReference>
<dbReference type="PROSITE" id="PS01055">
    <property type="entry name" value="DNA_LIGASE_N1"/>
    <property type="match status" value="1"/>
</dbReference>
<dbReference type="PROSITE" id="PS01056">
    <property type="entry name" value="DNA_LIGASE_N2"/>
    <property type="match status" value="1"/>
</dbReference>
<accession>Q2J6U3</accession>
<feature type="chain" id="PRO_0000313245" description="DNA ligase">
    <location>
        <begin position="1"/>
        <end position="706"/>
    </location>
</feature>
<feature type="domain" description="BRCT" evidence="1">
    <location>
        <begin position="604"/>
        <end position="694"/>
    </location>
</feature>
<feature type="region of interest" description="Disordered" evidence="2">
    <location>
        <begin position="1"/>
        <end position="20"/>
    </location>
</feature>
<feature type="active site" description="N6-AMP-lysine intermediate" evidence="1">
    <location>
        <position position="130"/>
    </location>
</feature>
<feature type="binding site" evidence="1">
    <location>
        <begin position="50"/>
        <end position="54"/>
    </location>
    <ligand>
        <name>NAD(+)</name>
        <dbReference type="ChEBI" id="CHEBI:57540"/>
    </ligand>
</feature>
<feature type="binding site" evidence="1">
    <location>
        <begin position="99"/>
        <end position="100"/>
    </location>
    <ligand>
        <name>NAD(+)</name>
        <dbReference type="ChEBI" id="CHEBI:57540"/>
    </ligand>
</feature>
<feature type="binding site" evidence="1">
    <location>
        <position position="128"/>
    </location>
    <ligand>
        <name>NAD(+)</name>
        <dbReference type="ChEBI" id="CHEBI:57540"/>
    </ligand>
</feature>
<feature type="binding site" evidence="1">
    <location>
        <position position="151"/>
    </location>
    <ligand>
        <name>NAD(+)</name>
        <dbReference type="ChEBI" id="CHEBI:57540"/>
    </ligand>
</feature>
<feature type="binding site" evidence="1">
    <location>
        <position position="188"/>
    </location>
    <ligand>
        <name>NAD(+)</name>
        <dbReference type="ChEBI" id="CHEBI:57540"/>
    </ligand>
</feature>
<feature type="binding site" evidence="1">
    <location>
        <position position="304"/>
    </location>
    <ligand>
        <name>NAD(+)</name>
        <dbReference type="ChEBI" id="CHEBI:57540"/>
    </ligand>
</feature>
<feature type="binding site" evidence="1">
    <location>
        <position position="328"/>
    </location>
    <ligand>
        <name>NAD(+)</name>
        <dbReference type="ChEBI" id="CHEBI:57540"/>
    </ligand>
</feature>
<feature type="binding site" evidence="1">
    <location>
        <position position="422"/>
    </location>
    <ligand>
        <name>Zn(2+)</name>
        <dbReference type="ChEBI" id="CHEBI:29105"/>
    </ligand>
</feature>
<feature type="binding site" evidence="1">
    <location>
        <position position="425"/>
    </location>
    <ligand>
        <name>Zn(2+)</name>
        <dbReference type="ChEBI" id="CHEBI:29105"/>
    </ligand>
</feature>
<feature type="binding site" evidence="1">
    <location>
        <position position="440"/>
    </location>
    <ligand>
        <name>Zn(2+)</name>
        <dbReference type="ChEBI" id="CHEBI:29105"/>
    </ligand>
</feature>
<feature type="binding site" evidence="1">
    <location>
        <position position="446"/>
    </location>
    <ligand>
        <name>Zn(2+)</name>
        <dbReference type="ChEBI" id="CHEBI:29105"/>
    </ligand>
</feature>
<sequence length="706" mass="75837">MSATAGTADESGVASAAASADERARAASLARELDEHAYRYYVLDSPTISDAEYDRLMAELAALEERHPDLRTPDSPTQKVAGSYSTLFTPVEHLERMLSLENVFDDDEFHQWAARVARESEVDAWLCELKIDGLAVDLVYEDGYLVRAATRGDGRTGEDITPNIRTLASVPVRLRGPRVPGLLEVRGEVFFPTAKFAELNAGLVAVGGKPFANPRNAAAGSLRQKDPRVTATRPLEMIVHGLGAQRGFEVTSQSAAYARFAELGLPVATHFEVLATVPGVLDYVHRWGDARHDVVHEIDGVVVKVDSFALQRRLGSTSKSPRWAVAYKYPPEEVTTKLRDIRVNVGRTGRVTPFGELEPVLVAGSTVGLATLHNIDEVGRKGVLIGDTVVLRKAGDVIPEIVGPVVDLREGSERAFVMPTRCPECGTELVRPEGEVDIRCPNTVSCPAQLRESIFHFASRGAMDIDGLGYETATALLEAGRVRDIGDIFHLTPESFEGLRGFAQKKIDQILRGVEAARHRPLWRLLVGLSIRHVGPTAARALARELRSLEAIAATSAEDLAAVEGVGPKIAGAVLDWFADERHRDILARIAAGGARLADVGAEEGPRPLDGVTVVITGTLTDWSRDSAKEAVEARGGKVTGSVSRKTTAVVVGADPGASKYDKARSLRIPMLDEAGFAVLLAQGVDAASKLAVPADGPEKAETPVE</sequence>
<name>DNLJ_FRACC</name>
<comment type="function">
    <text evidence="1">DNA ligase that catalyzes the formation of phosphodiester linkages between 5'-phosphoryl and 3'-hydroxyl groups in double-stranded DNA using NAD as a coenzyme and as the energy source for the reaction. It is essential for DNA replication and repair of damaged DNA.</text>
</comment>
<comment type="catalytic activity">
    <reaction evidence="1">
        <text>NAD(+) + (deoxyribonucleotide)n-3'-hydroxyl + 5'-phospho-(deoxyribonucleotide)m = (deoxyribonucleotide)n+m + AMP + beta-nicotinamide D-nucleotide.</text>
        <dbReference type="EC" id="6.5.1.2"/>
    </reaction>
</comment>
<comment type="cofactor">
    <cofactor evidence="1">
        <name>Mg(2+)</name>
        <dbReference type="ChEBI" id="CHEBI:18420"/>
    </cofactor>
    <cofactor evidence="1">
        <name>Mn(2+)</name>
        <dbReference type="ChEBI" id="CHEBI:29035"/>
    </cofactor>
</comment>
<comment type="similarity">
    <text evidence="1">Belongs to the NAD-dependent DNA ligase family. LigA subfamily.</text>
</comment>
<gene>
    <name evidence="1" type="primary">ligA</name>
    <name type="ordered locus">Francci3_3647</name>
</gene>